<feature type="chain" id="PRO_0000063129" description="Purine nucleoside phosphorylase DeoD-type">
    <location>
        <begin position="1"/>
        <end position="239"/>
    </location>
</feature>
<feature type="active site" description="Proton donor" evidence="2">
    <location>
        <position position="205"/>
    </location>
</feature>
<feature type="binding site" evidence="1">
    <location>
        <position position="5"/>
    </location>
    <ligand>
        <name>a purine D-ribonucleoside</name>
        <dbReference type="ChEBI" id="CHEBI:142355"/>
        <note>ligand shared between dimeric partners</note>
    </ligand>
</feature>
<feature type="binding site" description="in other chain" evidence="1">
    <location>
        <position position="21"/>
    </location>
    <ligand>
        <name>phosphate</name>
        <dbReference type="ChEBI" id="CHEBI:43474"/>
        <note>ligand shared between dimeric partners</note>
    </ligand>
</feature>
<feature type="binding site" description="in other chain" evidence="1">
    <location>
        <position position="25"/>
    </location>
    <ligand>
        <name>phosphate</name>
        <dbReference type="ChEBI" id="CHEBI:43474"/>
        <note>ligand shared between dimeric partners</note>
    </ligand>
</feature>
<feature type="binding site" evidence="1">
    <location>
        <position position="44"/>
    </location>
    <ligand>
        <name>phosphate</name>
        <dbReference type="ChEBI" id="CHEBI:43474"/>
        <note>ligand shared between dimeric partners</note>
    </ligand>
</feature>
<feature type="binding site" description="in other chain" evidence="1">
    <location>
        <begin position="88"/>
        <end position="91"/>
    </location>
    <ligand>
        <name>phosphate</name>
        <dbReference type="ChEBI" id="CHEBI:43474"/>
        <note>ligand shared between dimeric partners</note>
    </ligand>
</feature>
<feature type="binding site" description="in other chain" evidence="1">
    <location>
        <begin position="180"/>
        <end position="182"/>
    </location>
    <ligand>
        <name>a purine D-ribonucleoside</name>
        <dbReference type="ChEBI" id="CHEBI:142355"/>
        <note>ligand shared between dimeric partners</note>
    </ligand>
</feature>
<feature type="binding site" description="in other chain" evidence="1">
    <location>
        <begin position="204"/>
        <end position="205"/>
    </location>
    <ligand>
        <name>a purine D-ribonucleoside</name>
        <dbReference type="ChEBI" id="CHEBI:142355"/>
        <note>ligand shared between dimeric partners</note>
    </ligand>
</feature>
<feature type="site" description="Important for catalytic activity" evidence="2">
    <location>
        <position position="218"/>
    </location>
</feature>
<protein>
    <recommendedName>
        <fullName evidence="2">Purine nucleoside phosphorylase DeoD-type</fullName>
        <shortName evidence="2">PNP</shortName>
        <ecNumber evidence="2">2.4.2.1</ecNumber>
    </recommendedName>
</protein>
<evidence type="ECO:0000250" key="1">
    <source>
        <dbReference type="UniProtKB" id="P50389"/>
    </source>
</evidence>
<evidence type="ECO:0000255" key="2">
    <source>
        <dbReference type="HAMAP-Rule" id="MF_01627"/>
    </source>
</evidence>
<comment type="function">
    <text evidence="2">Catalyzes the reversible phosphorolytic breakdown of the N-glycosidic bond in the beta-(deoxy)ribonucleoside molecules, with the formation of the corresponding free purine bases and pentose-1-phosphate.</text>
</comment>
<comment type="catalytic activity">
    <reaction evidence="2">
        <text>a purine D-ribonucleoside + phosphate = a purine nucleobase + alpha-D-ribose 1-phosphate</text>
        <dbReference type="Rhea" id="RHEA:19805"/>
        <dbReference type="ChEBI" id="CHEBI:26386"/>
        <dbReference type="ChEBI" id="CHEBI:43474"/>
        <dbReference type="ChEBI" id="CHEBI:57720"/>
        <dbReference type="ChEBI" id="CHEBI:142355"/>
        <dbReference type="EC" id="2.4.2.1"/>
    </reaction>
</comment>
<comment type="catalytic activity">
    <reaction evidence="2">
        <text>a purine 2'-deoxy-D-ribonucleoside + phosphate = a purine nucleobase + 2-deoxy-alpha-D-ribose 1-phosphate</text>
        <dbReference type="Rhea" id="RHEA:36431"/>
        <dbReference type="ChEBI" id="CHEBI:26386"/>
        <dbReference type="ChEBI" id="CHEBI:43474"/>
        <dbReference type="ChEBI" id="CHEBI:57259"/>
        <dbReference type="ChEBI" id="CHEBI:142361"/>
        <dbReference type="EC" id="2.4.2.1"/>
    </reaction>
</comment>
<comment type="subunit">
    <text evidence="2">Homohexamer; trimer of homodimers.</text>
</comment>
<comment type="similarity">
    <text evidence="2">Belongs to the PNP/UDP phosphorylase family.</text>
</comment>
<name>DEOD_PECAS</name>
<organism>
    <name type="scientific">Pectobacterium atrosepticum (strain SCRI 1043 / ATCC BAA-672)</name>
    <name type="common">Erwinia carotovora subsp. atroseptica</name>
    <dbReference type="NCBI Taxonomy" id="218491"/>
    <lineage>
        <taxon>Bacteria</taxon>
        <taxon>Pseudomonadati</taxon>
        <taxon>Pseudomonadota</taxon>
        <taxon>Gammaproteobacteria</taxon>
        <taxon>Enterobacterales</taxon>
        <taxon>Pectobacteriaceae</taxon>
        <taxon>Pectobacterium</taxon>
    </lineage>
</organism>
<sequence length="239" mass="26038">MATPHINAEMGDFADVVLMPGDPLRAKFIAETFLDDAREVNNVRGMLGFTGTYKGRKISVMGHGMGIPSCSIYAKELITEFGVKKIIRVGSCGAVREDVKLRDVVIGMGACTDSKVNRMRFKDHDYAAIADFDMVRNAVDAAKARDVSVRVGNIFSADLFYTPDPQMFDVMEKYGILGVEMEAAGIYGVAAEFGAKALAICTVSDHIRTGAQTTSEERQTTFNEMIEIALESVLLGDNE</sequence>
<proteinExistence type="inferred from homology"/>
<accession>Q6D989</accession>
<reference key="1">
    <citation type="journal article" date="2004" name="Proc. Natl. Acad. Sci. U.S.A.">
        <title>Genome sequence of the enterobacterial phytopathogen Erwinia carotovora subsp. atroseptica and characterization of virulence factors.</title>
        <authorList>
            <person name="Bell K.S."/>
            <person name="Sebaihia M."/>
            <person name="Pritchard L."/>
            <person name="Holden M.T.G."/>
            <person name="Hyman L.J."/>
            <person name="Holeva M.C."/>
            <person name="Thomson N.R."/>
            <person name="Bentley S.D."/>
            <person name="Churcher L.J.C."/>
            <person name="Mungall K."/>
            <person name="Atkin R."/>
            <person name="Bason N."/>
            <person name="Brooks K."/>
            <person name="Chillingworth T."/>
            <person name="Clark K."/>
            <person name="Doggett J."/>
            <person name="Fraser A."/>
            <person name="Hance Z."/>
            <person name="Hauser H."/>
            <person name="Jagels K."/>
            <person name="Moule S."/>
            <person name="Norbertczak H."/>
            <person name="Ormond D."/>
            <person name="Price C."/>
            <person name="Quail M.A."/>
            <person name="Sanders M."/>
            <person name="Walker D."/>
            <person name="Whitehead S."/>
            <person name="Salmond G.P.C."/>
            <person name="Birch P.R.J."/>
            <person name="Parkhill J."/>
            <person name="Toth I.K."/>
        </authorList>
    </citation>
    <scope>NUCLEOTIDE SEQUENCE [LARGE SCALE GENOMIC DNA]</scope>
    <source>
        <strain>SCRI 1043 / ATCC BAA-672</strain>
    </source>
</reference>
<keyword id="KW-0328">Glycosyltransferase</keyword>
<keyword id="KW-1185">Reference proteome</keyword>
<keyword id="KW-0808">Transferase</keyword>
<dbReference type="EC" id="2.4.2.1" evidence="2"/>
<dbReference type="EMBL" id="BX950851">
    <property type="protein sequence ID" value="CAG73644.1"/>
    <property type="molecule type" value="Genomic_DNA"/>
</dbReference>
<dbReference type="RefSeq" id="WP_011092337.1">
    <property type="nucleotide sequence ID" value="NC_004547.2"/>
</dbReference>
<dbReference type="SMR" id="Q6D989"/>
<dbReference type="STRING" id="218491.ECA0730"/>
<dbReference type="GeneID" id="57207457"/>
<dbReference type="KEGG" id="eca:ECA0730"/>
<dbReference type="PATRIC" id="fig|218491.5.peg.728"/>
<dbReference type="eggNOG" id="COG0813">
    <property type="taxonomic scope" value="Bacteria"/>
</dbReference>
<dbReference type="HOGENOM" id="CLU_068457_2_0_6"/>
<dbReference type="OrthoDB" id="9782889at2"/>
<dbReference type="Proteomes" id="UP000007966">
    <property type="component" value="Chromosome"/>
</dbReference>
<dbReference type="GO" id="GO:0005829">
    <property type="term" value="C:cytosol"/>
    <property type="evidence" value="ECO:0007669"/>
    <property type="project" value="TreeGrafter"/>
</dbReference>
<dbReference type="GO" id="GO:0004731">
    <property type="term" value="F:purine-nucleoside phosphorylase activity"/>
    <property type="evidence" value="ECO:0007669"/>
    <property type="project" value="UniProtKB-UniRule"/>
</dbReference>
<dbReference type="GO" id="GO:0006152">
    <property type="term" value="P:purine nucleoside catabolic process"/>
    <property type="evidence" value="ECO:0007669"/>
    <property type="project" value="TreeGrafter"/>
</dbReference>
<dbReference type="CDD" id="cd09006">
    <property type="entry name" value="PNP_EcPNPI-like"/>
    <property type="match status" value="1"/>
</dbReference>
<dbReference type="FunFam" id="3.40.50.1580:FF:000002">
    <property type="entry name" value="Purine nucleoside phosphorylase DeoD-type"/>
    <property type="match status" value="1"/>
</dbReference>
<dbReference type="Gene3D" id="3.40.50.1580">
    <property type="entry name" value="Nucleoside phosphorylase domain"/>
    <property type="match status" value="1"/>
</dbReference>
<dbReference type="HAMAP" id="MF_01627">
    <property type="entry name" value="Pur_nucleosid_phosp"/>
    <property type="match status" value="1"/>
</dbReference>
<dbReference type="InterPro" id="IPR004402">
    <property type="entry name" value="DeoD-type"/>
</dbReference>
<dbReference type="InterPro" id="IPR018016">
    <property type="entry name" value="Nucleoside_phosphorylase_CS"/>
</dbReference>
<dbReference type="InterPro" id="IPR000845">
    <property type="entry name" value="Nucleoside_phosphorylase_d"/>
</dbReference>
<dbReference type="InterPro" id="IPR035994">
    <property type="entry name" value="Nucleoside_phosphorylase_sf"/>
</dbReference>
<dbReference type="NCBIfam" id="TIGR00107">
    <property type="entry name" value="deoD"/>
    <property type="match status" value="1"/>
</dbReference>
<dbReference type="NCBIfam" id="NF004489">
    <property type="entry name" value="PRK05819.1"/>
    <property type="match status" value="1"/>
</dbReference>
<dbReference type="NCBIfam" id="NF009914">
    <property type="entry name" value="PRK13374.1"/>
    <property type="match status" value="1"/>
</dbReference>
<dbReference type="PANTHER" id="PTHR43691:SF2">
    <property type="entry name" value="PURINE NUCLEOSIDE PHOSPHORYLASE DEOD-TYPE"/>
    <property type="match status" value="1"/>
</dbReference>
<dbReference type="PANTHER" id="PTHR43691">
    <property type="entry name" value="URIDINE PHOSPHORYLASE"/>
    <property type="match status" value="1"/>
</dbReference>
<dbReference type="Pfam" id="PF01048">
    <property type="entry name" value="PNP_UDP_1"/>
    <property type="match status" value="1"/>
</dbReference>
<dbReference type="SUPFAM" id="SSF53167">
    <property type="entry name" value="Purine and uridine phosphorylases"/>
    <property type="match status" value="1"/>
</dbReference>
<dbReference type="PROSITE" id="PS01232">
    <property type="entry name" value="PNP_UDP_1"/>
    <property type="match status" value="1"/>
</dbReference>
<gene>
    <name evidence="2" type="primary">deoD</name>
    <name type="ordered locus">ECA0730</name>
</gene>